<reference key="1">
    <citation type="journal article" date="1999" name="Mol. Gen. Genet.">
        <title>Shiga toxins even when different are encoded at identical positions in the genomes of related temperate bacteriophages.</title>
        <authorList>
            <person name="Karch H."/>
            <person name="Schmidt H."/>
            <person name="Janetzki-Mittmann C."/>
            <person name="Scheef J."/>
            <person name="Kroeger M."/>
        </authorList>
    </citation>
    <scope>NUCLEOTIDE SEQUENCE [GENOMIC DNA]</scope>
</reference>
<reference key="2">
    <citation type="journal article" date="1999" name="J. Bacteriol.">
        <title>Sequence of Shiga toxin 2 phage 933W from Escherichia coli O157:H7: Shiga toxin as a phage late-gene product.</title>
        <authorList>
            <person name="Plunkett G. III"/>
            <person name="Rose D.J."/>
            <person name="Durfee T.J."/>
            <person name="Blattner F.R."/>
        </authorList>
    </citation>
    <scope>NUCLEOTIDE SEQUENCE [LARGE SCALE GENOMIC DNA]</scope>
</reference>
<dbReference type="EMBL" id="Y10775">
    <property type="protein sequence ID" value="CAB39298.1"/>
    <property type="molecule type" value="Genomic_DNA"/>
</dbReference>
<dbReference type="EMBL" id="AF125520">
    <property type="protein sequence ID" value="AAD25443.1"/>
    <property type="molecule type" value="Genomic_DNA"/>
</dbReference>
<dbReference type="RefSeq" id="NP_049498.1">
    <property type="nucleotide sequence ID" value="NC_000924.1"/>
</dbReference>
<dbReference type="SMR" id="P69176"/>
<dbReference type="GeneID" id="1261973"/>
<dbReference type="KEGG" id="vg:1261973"/>
<dbReference type="OrthoDB" id="21777at10239"/>
<dbReference type="Proteomes" id="UP000002135">
    <property type="component" value="Genome"/>
</dbReference>
<dbReference type="InterPro" id="IPR010454">
    <property type="entry name" value="Phage_NinH"/>
</dbReference>
<dbReference type="Pfam" id="PF06322">
    <property type="entry name" value="Phage_NinH"/>
    <property type="match status" value="1"/>
</dbReference>
<accession>P69176</accession>
<accession>Q9ZWX0</accession>
<sequence>MTFTVKTIPDMLVEAYENQTEVARILNCSRNTVRKYTGDKEGKRHAIVNGVLMVHRGWGKDTDA</sequence>
<feature type="chain" id="PRO_0000077635" description="Protein ninH">
    <location>
        <begin position="1"/>
        <end position="64"/>
    </location>
</feature>
<organism>
    <name type="scientific">Escherichia phage 933W</name>
    <name type="common">Bacteriophage 933W</name>
    <dbReference type="NCBI Taxonomy" id="10730"/>
    <lineage>
        <taxon>Viruses</taxon>
        <taxon>Duplodnaviria</taxon>
        <taxon>Heunggongvirae</taxon>
        <taxon>Uroviricota</taxon>
        <taxon>Caudoviricetes</taxon>
        <taxon>Sepvirinae</taxon>
        <taxon>Traversvirus</taxon>
        <taxon>Traversvirus tv933W</taxon>
    </lineage>
</organism>
<gene>
    <name type="primary">ninH</name>
    <name type="ordered locus">L0098</name>
</gene>
<proteinExistence type="inferred from homology"/>
<comment type="similarity">
    <text evidence="1">Belongs to the ninH family.</text>
</comment>
<protein>
    <recommendedName>
        <fullName>Protein ninH</fullName>
    </recommendedName>
</protein>
<evidence type="ECO:0000305" key="1"/>
<name>NINH_BP933</name>
<organismHost>
    <name type="scientific">Escherichia coli O157:H7</name>
    <dbReference type="NCBI Taxonomy" id="83334"/>
</organismHost>
<keyword id="KW-1185">Reference proteome</keyword>